<reference key="1">
    <citation type="journal article" date="2009" name="PLoS Genet.">
        <title>The complete genome and proteome of Laribacter hongkongensis reveal potential mechanisms for adaptations to different temperatures and habitats.</title>
        <authorList>
            <person name="Woo P.C.Y."/>
            <person name="Lau S.K.P."/>
            <person name="Tse H."/>
            <person name="Teng J.L.L."/>
            <person name="Curreem S.O."/>
            <person name="Tsang A.K.L."/>
            <person name="Fan R.Y.Y."/>
            <person name="Wong G.K.M."/>
            <person name="Huang Y."/>
            <person name="Loman N.J."/>
            <person name="Snyder L.A.S."/>
            <person name="Cai J.J."/>
            <person name="Huang J.-D."/>
            <person name="Mak W."/>
            <person name="Pallen M.J."/>
            <person name="Lok S."/>
            <person name="Yuen K.-Y."/>
        </authorList>
    </citation>
    <scope>NUCLEOTIDE SEQUENCE [LARGE SCALE GENOMIC DNA]</scope>
    <source>
        <strain>HLHK9</strain>
    </source>
</reference>
<organism>
    <name type="scientific">Laribacter hongkongensis (strain HLHK9)</name>
    <dbReference type="NCBI Taxonomy" id="557598"/>
    <lineage>
        <taxon>Bacteria</taxon>
        <taxon>Pseudomonadati</taxon>
        <taxon>Pseudomonadota</taxon>
        <taxon>Betaproteobacteria</taxon>
        <taxon>Neisseriales</taxon>
        <taxon>Aquaspirillaceae</taxon>
        <taxon>Laribacter</taxon>
    </lineage>
</organism>
<sequence length="95" mass="10287">MALSSDDVVKIARLARLRVSEAERGAVQGQLNGIFDLIEAMRAVDTAGVEPMAHPQDAALRLRADAVTETDRRSAYQAVAPQVENGLYLVPKVIE</sequence>
<dbReference type="EC" id="6.3.5.-" evidence="1"/>
<dbReference type="EMBL" id="CP001154">
    <property type="protein sequence ID" value="ACO76047.1"/>
    <property type="molecule type" value="Genomic_DNA"/>
</dbReference>
<dbReference type="RefSeq" id="WP_012698510.1">
    <property type="nucleotide sequence ID" value="NC_012559.1"/>
</dbReference>
<dbReference type="SMR" id="C1D5N0"/>
<dbReference type="STRING" id="557598.LHK_03069"/>
<dbReference type="GeneID" id="75108275"/>
<dbReference type="KEGG" id="lhk:LHK_03069"/>
<dbReference type="eggNOG" id="COG0721">
    <property type="taxonomic scope" value="Bacteria"/>
</dbReference>
<dbReference type="HOGENOM" id="CLU_105899_2_2_4"/>
<dbReference type="Proteomes" id="UP000002010">
    <property type="component" value="Chromosome"/>
</dbReference>
<dbReference type="GO" id="GO:0050566">
    <property type="term" value="F:asparaginyl-tRNA synthase (glutamine-hydrolyzing) activity"/>
    <property type="evidence" value="ECO:0007669"/>
    <property type="project" value="RHEA"/>
</dbReference>
<dbReference type="GO" id="GO:0005524">
    <property type="term" value="F:ATP binding"/>
    <property type="evidence" value="ECO:0007669"/>
    <property type="project" value="UniProtKB-KW"/>
</dbReference>
<dbReference type="GO" id="GO:0050567">
    <property type="term" value="F:glutaminyl-tRNA synthase (glutamine-hydrolyzing) activity"/>
    <property type="evidence" value="ECO:0007669"/>
    <property type="project" value="UniProtKB-UniRule"/>
</dbReference>
<dbReference type="GO" id="GO:0070681">
    <property type="term" value="P:glutaminyl-tRNAGln biosynthesis via transamidation"/>
    <property type="evidence" value="ECO:0007669"/>
    <property type="project" value="TreeGrafter"/>
</dbReference>
<dbReference type="GO" id="GO:0006450">
    <property type="term" value="P:regulation of translational fidelity"/>
    <property type="evidence" value="ECO:0007669"/>
    <property type="project" value="InterPro"/>
</dbReference>
<dbReference type="GO" id="GO:0006412">
    <property type="term" value="P:translation"/>
    <property type="evidence" value="ECO:0007669"/>
    <property type="project" value="UniProtKB-UniRule"/>
</dbReference>
<dbReference type="Gene3D" id="1.10.20.60">
    <property type="entry name" value="Glu-tRNAGln amidotransferase C subunit, N-terminal domain"/>
    <property type="match status" value="1"/>
</dbReference>
<dbReference type="HAMAP" id="MF_00122">
    <property type="entry name" value="GatC"/>
    <property type="match status" value="1"/>
</dbReference>
<dbReference type="InterPro" id="IPR036113">
    <property type="entry name" value="Asp/Glu-ADT_sf_sub_c"/>
</dbReference>
<dbReference type="InterPro" id="IPR003837">
    <property type="entry name" value="GatC"/>
</dbReference>
<dbReference type="NCBIfam" id="TIGR00135">
    <property type="entry name" value="gatC"/>
    <property type="match status" value="1"/>
</dbReference>
<dbReference type="PANTHER" id="PTHR15004">
    <property type="entry name" value="GLUTAMYL-TRNA(GLN) AMIDOTRANSFERASE SUBUNIT C, MITOCHONDRIAL"/>
    <property type="match status" value="1"/>
</dbReference>
<dbReference type="PANTHER" id="PTHR15004:SF0">
    <property type="entry name" value="GLUTAMYL-TRNA(GLN) AMIDOTRANSFERASE SUBUNIT C, MITOCHONDRIAL"/>
    <property type="match status" value="1"/>
</dbReference>
<dbReference type="Pfam" id="PF02686">
    <property type="entry name" value="GatC"/>
    <property type="match status" value="1"/>
</dbReference>
<dbReference type="SUPFAM" id="SSF141000">
    <property type="entry name" value="Glu-tRNAGln amidotransferase C subunit"/>
    <property type="match status" value="1"/>
</dbReference>
<keyword id="KW-0067">ATP-binding</keyword>
<keyword id="KW-0436">Ligase</keyword>
<keyword id="KW-0547">Nucleotide-binding</keyword>
<keyword id="KW-0648">Protein biosynthesis</keyword>
<keyword id="KW-1185">Reference proteome</keyword>
<gene>
    <name evidence="1" type="primary">gatC</name>
    <name type="ordered locus">LHK_03069</name>
</gene>
<comment type="function">
    <text evidence="1">Allows the formation of correctly charged Asn-tRNA(Asn) or Gln-tRNA(Gln) through the transamidation of misacylated Asp-tRNA(Asn) or Glu-tRNA(Gln) in organisms which lack either or both of asparaginyl-tRNA or glutaminyl-tRNA synthetases. The reaction takes place in the presence of glutamine and ATP through an activated phospho-Asp-tRNA(Asn) or phospho-Glu-tRNA(Gln).</text>
</comment>
<comment type="catalytic activity">
    <reaction evidence="1">
        <text>L-glutamyl-tRNA(Gln) + L-glutamine + ATP + H2O = L-glutaminyl-tRNA(Gln) + L-glutamate + ADP + phosphate + H(+)</text>
        <dbReference type="Rhea" id="RHEA:17521"/>
        <dbReference type="Rhea" id="RHEA-COMP:9681"/>
        <dbReference type="Rhea" id="RHEA-COMP:9684"/>
        <dbReference type="ChEBI" id="CHEBI:15377"/>
        <dbReference type="ChEBI" id="CHEBI:15378"/>
        <dbReference type="ChEBI" id="CHEBI:29985"/>
        <dbReference type="ChEBI" id="CHEBI:30616"/>
        <dbReference type="ChEBI" id="CHEBI:43474"/>
        <dbReference type="ChEBI" id="CHEBI:58359"/>
        <dbReference type="ChEBI" id="CHEBI:78520"/>
        <dbReference type="ChEBI" id="CHEBI:78521"/>
        <dbReference type="ChEBI" id="CHEBI:456216"/>
    </reaction>
</comment>
<comment type="catalytic activity">
    <reaction evidence="1">
        <text>L-aspartyl-tRNA(Asn) + L-glutamine + ATP + H2O = L-asparaginyl-tRNA(Asn) + L-glutamate + ADP + phosphate + 2 H(+)</text>
        <dbReference type="Rhea" id="RHEA:14513"/>
        <dbReference type="Rhea" id="RHEA-COMP:9674"/>
        <dbReference type="Rhea" id="RHEA-COMP:9677"/>
        <dbReference type="ChEBI" id="CHEBI:15377"/>
        <dbReference type="ChEBI" id="CHEBI:15378"/>
        <dbReference type="ChEBI" id="CHEBI:29985"/>
        <dbReference type="ChEBI" id="CHEBI:30616"/>
        <dbReference type="ChEBI" id="CHEBI:43474"/>
        <dbReference type="ChEBI" id="CHEBI:58359"/>
        <dbReference type="ChEBI" id="CHEBI:78515"/>
        <dbReference type="ChEBI" id="CHEBI:78516"/>
        <dbReference type="ChEBI" id="CHEBI:456216"/>
    </reaction>
</comment>
<comment type="subunit">
    <text evidence="1">Heterotrimer of A, B and C subunits.</text>
</comment>
<comment type="similarity">
    <text evidence="1">Belongs to the GatC family.</text>
</comment>
<proteinExistence type="inferred from homology"/>
<feature type="chain" id="PRO_1000122569" description="Aspartyl/glutamyl-tRNA(Asn/Gln) amidotransferase subunit C">
    <location>
        <begin position="1"/>
        <end position="95"/>
    </location>
</feature>
<accession>C1D5N0</accession>
<name>GATC_LARHH</name>
<protein>
    <recommendedName>
        <fullName evidence="1">Aspartyl/glutamyl-tRNA(Asn/Gln) amidotransferase subunit C</fullName>
        <shortName evidence="1">Asp/Glu-ADT subunit C</shortName>
        <ecNumber evidence="1">6.3.5.-</ecNumber>
    </recommendedName>
</protein>
<evidence type="ECO:0000255" key="1">
    <source>
        <dbReference type="HAMAP-Rule" id="MF_00122"/>
    </source>
</evidence>